<accession>B3PIC5</accession>
<name>CCME_CELJU</name>
<reference key="1">
    <citation type="journal article" date="2008" name="J. Bacteriol.">
        <title>Insights into plant cell wall degradation from the genome sequence of the soil bacterium Cellvibrio japonicus.</title>
        <authorList>
            <person name="DeBoy R.T."/>
            <person name="Mongodin E.F."/>
            <person name="Fouts D.E."/>
            <person name="Tailford L.E."/>
            <person name="Khouri H."/>
            <person name="Emerson J.B."/>
            <person name="Mohamoud Y."/>
            <person name="Watkins K."/>
            <person name="Henrissat B."/>
            <person name="Gilbert H.J."/>
            <person name="Nelson K.E."/>
        </authorList>
    </citation>
    <scope>NUCLEOTIDE SEQUENCE [LARGE SCALE GENOMIC DNA]</scope>
    <source>
        <strain>Ueda107</strain>
    </source>
</reference>
<protein>
    <recommendedName>
        <fullName evidence="1">Cytochrome c-type biogenesis protein CcmE</fullName>
    </recommendedName>
    <alternativeName>
        <fullName evidence="1">Cytochrome c maturation protein E</fullName>
    </alternativeName>
    <alternativeName>
        <fullName evidence="1">Heme chaperone CcmE</fullName>
    </alternativeName>
</protein>
<dbReference type="EMBL" id="CP000934">
    <property type="protein sequence ID" value="ACE85227.1"/>
    <property type="molecule type" value="Genomic_DNA"/>
</dbReference>
<dbReference type="RefSeq" id="WP_012487672.1">
    <property type="nucleotide sequence ID" value="NC_010995.1"/>
</dbReference>
<dbReference type="SMR" id="B3PIC5"/>
<dbReference type="STRING" id="498211.CJA_2065"/>
<dbReference type="KEGG" id="cja:CJA_2065"/>
<dbReference type="eggNOG" id="COG2332">
    <property type="taxonomic scope" value="Bacteria"/>
</dbReference>
<dbReference type="HOGENOM" id="CLU_079503_1_1_6"/>
<dbReference type="OrthoDB" id="9793584at2"/>
<dbReference type="Proteomes" id="UP000001036">
    <property type="component" value="Chromosome"/>
</dbReference>
<dbReference type="GO" id="GO:0005886">
    <property type="term" value="C:plasma membrane"/>
    <property type="evidence" value="ECO:0007669"/>
    <property type="project" value="UniProtKB-SubCell"/>
</dbReference>
<dbReference type="GO" id="GO:0020037">
    <property type="term" value="F:heme binding"/>
    <property type="evidence" value="ECO:0007669"/>
    <property type="project" value="InterPro"/>
</dbReference>
<dbReference type="GO" id="GO:0046872">
    <property type="term" value="F:metal ion binding"/>
    <property type="evidence" value="ECO:0007669"/>
    <property type="project" value="UniProtKB-KW"/>
</dbReference>
<dbReference type="GO" id="GO:0017004">
    <property type="term" value="P:cytochrome complex assembly"/>
    <property type="evidence" value="ECO:0007669"/>
    <property type="project" value="UniProtKB-KW"/>
</dbReference>
<dbReference type="FunFam" id="2.40.50.140:FF:000104">
    <property type="entry name" value="Cytochrome c-type biogenesis protein CcmE"/>
    <property type="match status" value="1"/>
</dbReference>
<dbReference type="Gene3D" id="2.40.50.140">
    <property type="entry name" value="Nucleic acid-binding proteins"/>
    <property type="match status" value="1"/>
</dbReference>
<dbReference type="HAMAP" id="MF_01959">
    <property type="entry name" value="CcmE"/>
    <property type="match status" value="1"/>
</dbReference>
<dbReference type="InterPro" id="IPR004329">
    <property type="entry name" value="CcmE"/>
</dbReference>
<dbReference type="InterPro" id="IPR036127">
    <property type="entry name" value="CcmE-like_sf"/>
</dbReference>
<dbReference type="InterPro" id="IPR012340">
    <property type="entry name" value="NA-bd_OB-fold"/>
</dbReference>
<dbReference type="NCBIfam" id="NF009727">
    <property type="entry name" value="PRK13254.1-1"/>
    <property type="match status" value="1"/>
</dbReference>
<dbReference type="NCBIfam" id="NF009729">
    <property type="entry name" value="PRK13254.1-3"/>
    <property type="match status" value="1"/>
</dbReference>
<dbReference type="NCBIfam" id="NF009731">
    <property type="entry name" value="PRK13254.1-5"/>
    <property type="match status" value="1"/>
</dbReference>
<dbReference type="PANTHER" id="PTHR34128">
    <property type="entry name" value="CYTOCHROME C-TYPE BIOGENESIS PROTEIN CCME HOMOLOG, MITOCHONDRIAL"/>
    <property type="match status" value="1"/>
</dbReference>
<dbReference type="PANTHER" id="PTHR34128:SF2">
    <property type="entry name" value="CYTOCHROME C-TYPE BIOGENESIS PROTEIN CCME HOMOLOG, MITOCHONDRIAL"/>
    <property type="match status" value="1"/>
</dbReference>
<dbReference type="Pfam" id="PF03100">
    <property type="entry name" value="CcmE"/>
    <property type="match status" value="1"/>
</dbReference>
<dbReference type="SUPFAM" id="SSF82093">
    <property type="entry name" value="Heme chaperone CcmE"/>
    <property type="match status" value="1"/>
</dbReference>
<feature type="chain" id="PRO_1000189010" description="Cytochrome c-type biogenesis protein CcmE">
    <location>
        <begin position="1"/>
        <end position="154"/>
    </location>
</feature>
<feature type="topological domain" description="Cytoplasmic" evidence="1">
    <location>
        <begin position="1"/>
        <end position="8"/>
    </location>
</feature>
<feature type="transmembrane region" description="Helical; Signal-anchor for type II membrane protein" evidence="1">
    <location>
        <begin position="9"/>
        <end position="29"/>
    </location>
</feature>
<feature type="topological domain" description="Periplasmic" evidence="1">
    <location>
        <begin position="30"/>
        <end position="154"/>
    </location>
</feature>
<feature type="binding site" description="covalent" evidence="1">
    <location>
        <position position="124"/>
    </location>
    <ligand>
        <name>heme</name>
        <dbReference type="ChEBI" id="CHEBI:30413"/>
    </ligand>
</feature>
<feature type="binding site" description="axial binding residue" evidence="1">
    <location>
        <position position="128"/>
    </location>
    <ligand>
        <name>heme</name>
        <dbReference type="ChEBI" id="CHEBI:30413"/>
    </ligand>
    <ligandPart>
        <name>Fe</name>
        <dbReference type="ChEBI" id="CHEBI:18248"/>
    </ligandPart>
</feature>
<proteinExistence type="inferred from homology"/>
<comment type="function">
    <text evidence="1">Heme chaperone required for the biogenesis of c-type cytochromes. Transiently binds heme delivered by CcmC and transfers the heme to apo-cytochromes in a process facilitated by CcmF and CcmH.</text>
</comment>
<comment type="subcellular location">
    <subcellularLocation>
        <location evidence="1">Cell inner membrane</location>
        <topology evidence="1">Single-pass type II membrane protein</topology>
        <orientation evidence="1">Periplasmic side</orientation>
    </subcellularLocation>
</comment>
<comment type="similarity">
    <text evidence="1">Belongs to the CcmE/CycJ family.</text>
</comment>
<evidence type="ECO:0000255" key="1">
    <source>
        <dbReference type="HAMAP-Rule" id="MF_01959"/>
    </source>
</evidence>
<keyword id="KW-0997">Cell inner membrane</keyword>
<keyword id="KW-1003">Cell membrane</keyword>
<keyword id="KW-0201">Cytochrome c-type biogenesis</keyword>
<keyword id="KW-0349">Heme</keyword>
<keyword id="KW-0408">Iron</keyword>
<keyword id="KW-0472">Membrane</keyword>
<keyword id="KW-0479">Metal-binding</keyword>
<keyword id="KW-1185">Reference proteome</keyword>
<keyword id="KW-0735">Signal-anchor</keyword>
<keyword id="KW-0812">Transmembrane</keyword>
<keyword id="KW-1133">Transmembrane helix</keyword>
<sequence>MHPQRKQRLMIVLFIVVFSSLAVGLIAYALRENINLFYPPSKIAAGDVPHNTRIRAGGCVKPGSVVRSQENLDVRFVITDGNADVVVSYTGILPDLFAEGEAAVINGIVTEAGDIQASEVLAKHDETYMPPEVAEAMKGKGQHQATCGGLNYGA</sequence>
<organism>
    <name type="scientific">Cellvibrio japonicus (strain Ueda107)</name>
    <name type="common">Pseudomonas fluorescens subsp. cellulosa</name>
    <dbReference type="NCBI Taxonomy" id="498211"/>
    <lineage>
        <taxon>Bacteria</taxon>
        <taxon>Pseudomonadati</taxon>
        <taxon>Pseudomonadota</taxon>
        <taxon>Gammaproteobacteria</taxon>
        <taxon>Cellvibrionales</taxon>
        <taxon>Cellvibrionaceae</taxon>
        <taxon>Cellvibrio</taxon>
    </lineage>
</organism>
<gene>
    <name evidence="1" type="primary">ccmE</name>
    <name evidence="1" type="synonym">cycJ</name>
    <name type="ordered locus">CJA_2065</name>
</gene>